<name>CPHB_SYNEL</name>
<evidence type="ECO:0000250" key="1"/>
<evidence type="ECO:0000305" key="2"/>
<gene>
    <name type="primary">cphB</name>
</gene>
<protein>
    <recommendedName>
        <fullName>Cyanophycinase</fullName>
        <ecNumber>3.4.15.6</ecNumber>
    </recommendedName>
</protein>
<proteinExistence type="inferred from homology"/>
<accession>P0C8P2</accession>
<accession>Q9F2I8</accession>
<comment type="function">
    <text>Exopeptidase that catalyzes the hydrolytic cleavage of multi-L-arginyl-poly-L-aspartic acid (cyanophycin; a water-insoluble reserve polymer) into aspartate-arginine dipeptides.</text>
</comment>
<comment type="catalytic activity">
    <reaction>
        <text>[L-4-(L-arginin-2-N-yl)aspartate](n) + H2O = [L-4-(L-arginin-2-N-yl)aspartate](n-1) + L-4-(L-arginin-2-N-yl)aspartate</text>
        <dbReference type="Rhea" id="RHEA:12845"/>
        <dbReference type="Rhea" id="RHEA-COMP:13728"/>
        <dbReference type="Rhea" id="RHEA-COMP:13734"/>
        <dbReference type="ChEBI" id="CHEBI:15377"/>
        <dbReference type="ChEBI" id="CHEBI:137986"/>
        <dbReference type="ChEBI" id="CHEBI:137991"/>
        <dbReference type="EC" id="3.4.15.6"/>
    </reaction>
</comment>
<comment type="similarity">
    <text evidence="2">Belongs to the peptidase S51 family.</text>
</comment>
<keyword id="KW-0378">Hydrolase</keyword>
<keyword id="KW-0645">Protease</keyword>
<keyword id="KW-0720">Serine protease</keyword>
<sequence length="322" mass="35503">MLYRIPVSTVGYWHSPWQIHQFLLPIERFIHRNPMLQLDPISKTTHQHSGHKGLVMAIGGAEDKVRGRQILTTFCQRAGGLDAVIGVIPSASREPDAMGRLYHDIFRDIGVREVDILLVGDRADAEQEEMLARLSRCTGIFMSGGDQLRLSALLDETPLLYQLRHQVWEGKSILGGTSAGAAVLGECMIASGGSNEAPNRSLVDLATGLGILPDVLVDQHFHNRNRLARLISAISAHPDKLGVGIDEDTCAMFEADGTLRVLGRGSVTIVDPRDVSYTNYAHVDVNEPLSIYNLRLHILSDGDCYNLRTHQVQHKCILPPLN</sequence>
<organism>
    <name type="scientific">Synechococcus elongatus</name>
    <dbReference type="NCBI Taxonomy" id="32046"/>
    <lineage>
        <taxon>Bacteria</taxon>
        <taxon>Bacillati</taxon>
        <taxon>Cyanobacteriota</taxon>
        <taxon>Cyanophyceae</taxon>
        <taxon>Synechococcales</taxon>
        <taxon>Synechococcaceae</taxon>
        <taxon>Synechococcus</taxon>
    </lineage>
</organism>
<feature type="chain" id="PRO_0000209973" description="Cyanophycinase">
    <location>
        <begin position="1"/>
        <end position="322"/>
    </location>
</feature>
<feature type="active site" description="Charge relay system" evidence="1">
    <location>
        <position position="178"/>
    </location>
</feature>
<feature type="active site" description="Charge relay system" evidence="1">
    <location>
        <position position="196"/>
    </location>
</feature>
<feature type="active site" description="Charge relay system" evidence="1">
    <location>
        <position position="220"/>
    </location>
</feature>
<reference key="1">
    <citation type="journal article" date="2000" name="Eur. J. Biochem.">
        <title>Biosynthesis of the cyanobacterial reserve polymer multi-L-arginyl-poly-L-aspartic acid (cyanophycin): mechanism of the cyanophycin synthetase reaction studied with synthetic primers.</title>
        <authorList>
            <person name="Berg H."/>
            <person name="Ziegler K."/>
            <person name="Piotukh K."/>
            <person name="Baier K."/>
            <person name="Lockau W."/>
            <person name="Volkmer-Engert R."/>
        </authorList>
    </citation>
    <scope>NUCLEOTIDE SEQUENCE [GENOMIC DNA]</scope>
</reference>
<dbReference type="EC" id="3.4.15.6"/>
<dbReference type="EMBL" id="AJ288949">
    <property type="protein sequence ID" value="CAC07986.1"/>
    <property type="molecule type" value="Genomic_DNA"/>
</dbReference>
<dbReference type="SMR" id="P0C8P2"/>
<dbReference type="GO" id="GO:0008241">
    <property type="term" value="F:peptidyl-dipeptidase activity"/>
    <property type="evidence" value="ECO:0007669"/>
    <property type="project" value="UniProtKB-EC"/>
</dbReference>
<dbReference type="GO" id="GO:0008236">
    <property type="term" value="F:serine-type peptidase activity"/>
    <property type="evidence" value="ECO:0007669"/>
    <property type="project" value="UniProtKB-KW"/>
</dbReference>
<dbReference type="GO" id="GO:0006508">
    <property type="term" value="P:proteolysis"/>
    <property type="evidence" value="ECO:0007669"/>
    <property type="project" value="UniProtKB-KW"/>
</dbReference>
<dbReference type="CDD" id="cd03145">
    <property type="entry name" value="GAT1_cyanophycinase"/>
    <property type="match status" value="1"/>
</dbReference>
<dbReference type="Gene3D" id="3.40.50.880">
    <property type="match status" value="1"/>
</dbReference>
<dbReference type="InterPro" id="IPR029062">
    <property type="entry name" value="Class_I_gatase-like"/>
</dbReference>
<dbReference type="InterPro" id="IPR005320">
    <property type="entry name" value="Peptidase_S51"/>
</dbReference>
<dbReference type="InterPro" id="IPR011811">
    <property type="entry name" value="Peptidase_S51_cyanophycinase"/>
</dbReference>
<dbReference type="NCBIfam" id="TIGR02069">
    <property type="entry name" value="cyanophycinase"/>
    <property type="match status" value="1"/>
</dbReference>
<dbReference type="PANTHER" id="PTHR36175">
    <property type="entry name" value="CYANOPHYCINASE"/>
    <property type="match status" value="1"/>
</dbReference>
<dbReference type="PANTHER" id="PTHR36175:SF1">
    <property type="entry name" value="CYANOPHYCINASE"/>
    <property type="match status" value="1"/>
</dbReference>
<dbReference type="Pfam" id="PF03575">
    <property type="entry name" value="Peptidase_S51"/>
    <property type="match status" value="1"/>
</dbReference>
<dbReference type="PIRSF" id="PIRSF032067">
    <property type="entry name" value="Cyanophycinase"/>
    <property type="match status" value="1"/>
</dbReference>
<dbReference type="SUPFAM" id="SSF52317">
    <property type="entry name" value="Class I glutamine amidotransferase-like"/>
    <property type="match status" value="1"/>
</dbReference>